<gene>
    <name evidence="1" type="primary">citG</name>
    <name type="ordered locus">PBPRA2290</name>
</gene>
<comment type="catalytic activity">
    <reaction evidence="1">
        <text>3'-dephospho-CoA + ATP = 2'-(5''-triphospho-alpha-D-ribosyl)-3'-dephospho-CoA + adenine</text>
        <dbReference type="Rhea" id="RHEA:15117"/>
        <dbReference type="ChEBI" id="CHEBI:16708"/>
        <dbReference type="ChEBI" id="CHEBI:30616"/>
        <dbReference type="ChEBI" id="CHEBI:57328"/>
        <dbReference type="ChEBI" id="CHEBI:61378"/>
        <dbReference type="EC" id="2.4.2.52"/>
    </reaction>
</comment>
<comment type="similarity">
    <text evidence="1">Belongs to the CitG/MdcB family.</text>
</comment>
<keyword id="KW-0067">ATP-binding</keyword>
<keyword id="KW-0547">Nucleotide-binding</keyword>
<keyword id="KW-1185">Reference proteome</keyword>
<keyword id="KW-0808">Transferase</keyword>
<proteinExistence type="inferred from homology"/>
<reference key="1">
    <citation type="journal article" date="2005" name="Science">
        <title>Life at depth: Photobacterium profundum genome sequence and expression analysis.</title>
        <authorList>
            <person name="Vezzi A."/>
            <person name="Campanaro S."/>
            <person name="D'Angelo M."/>
            <person name="Simonato F."/>
            <person name="Vitulo N."/>
            <person name="Lauro F.M."/>
            <person name="Cestaro A."/>
            <person name="Malacrida G."/>
            <person name="Simionati B."/>
            <person name="Cannata N."/>
            <person name="Romualdi C."/>
            <person name="Bartlett D.H."/>
            <person name="Valle G."/>
        </authorList>
    </citation>
    <scope>NUCLEOTIDE SEQUENCE [LARGE SCALE GENOMIC DNA]</scope>
    <source>
        <strain>ATCC BAA-1253 / SS9</strain>
    </source>
</reference>
<accession>Q6LPV0</accession>
<name>CITG_PHOPR</name>
<evidence type="ECO:0000255" key="1">
    <source>
        <dbReference type="HAMAP-Rule" id="MF_00397"/>
    </source>
</evidence>
<feature type="chain" id="PRO_0000255402" description="Probable 2-(5''-triphosphoribosyl)-3'-dephosphocoenzyme-A synthase">
    <location>
        <begin position="1"/>
        <end position="314"/>
    </location>
</feature>
<sequence>MINSAVNLLVNPQDYYIKSESREDLPQINLFKLVGNLGYHAMMLEVHLTPKPGLVDLCTNGAHDDMDIHTFENSAQAINPFLIKFLYAGLNHSDTPIDSLLPKLRPVGLNAEEAMFQATSGINTHKGMIFSLGIVCGVIGWLRGNNLSFDAMHISKAVKCCCHDLVFKELRQNHDKPKTYGEFLYKEHGLTGARGEAASGLATVMDHGLPAFEKTVKEGFSTEQALWQSLLVLMANNLDTNLVSRGGMEGLLYAQQAAQGLLVKGGCRYTNLESELTELDEIFTEKKLSPGGSADLLAITWLLAQMNELSPKYV</sequence>
<protein>
    <recommendedName>
        <fullName evidence="1">Probable 2-(5''-triphosphoribosyl)-3'-dephosphocoenzyme-A synthase</fullName>
        <shortName evidence="1">2-(5''-triphosphoribosyl)-3'-dephospho-CoA synthase</shortName>
        <ecNumber evidence="1">2.4.2.52</ecNumber>
    </recommendedName>
</protein>
<organism>
    <name type="scientific">Photobacterium profundum (strain SS9)</name>
    <dbReference type="NCBI Taxonomy" id="298386"/>
    <lineage>
        <taxon>Bacteria</taxon>
        <taxon>Pseudomonadati</taxon>
        <taxon>Pseudomonadota</taxon>
        <taxon>Gammaproteobacteria</taxon>
        <taxon>Vibrionales</taxon>
        <taxon>Vibrionaceae</taxon>
        <taxon>Photobacterium</taxon>
    </lineage>
</organism>
<dbReference type="EC" id="2.4.2.52" evidence="1"/>
<dbReference type="EMBL" id="CR378670">
    <property type="protein sequence ID" value="CAG20676.1"/>
    <property type="molecule type" value="Genomic_DNA"/>
</dbReference>
<dbReference type="RefSeq" id="WP_011218965.1">
    <property type="nucleotide sequence ID" value="NC_006370.1"/>
</dbReference>
<dbReference type="STRING" id="298386.PBPRA2290"/>
<dbReference type="KEGG" id="ppr:PBPRA2290"/>
<dbReference type="eggNOG" id="COG1767">
    <property type="taxonomic scope" value="Bacteria"/>
</dbReference>
<dbReference type="HOGENOM" id="CLU_056179_1_0_6"/>
<dbReference type="Proteomes" id="UP000000593">
    <property type="component" value="Chromosome 1"/>
</dbReference>
<dbReference type="GO" id="GO:0005524">
    <property type="term" value="F:ATP binding"/>
    <property type="evidence" value="ECO:0007669"/>
    <property type="project" value="UniProtKB-KW"/>
</dbReference>
<dbReference type="GO" id="GO:0046917">
    <property type="term" value="F:triphosphoribosyl-dephospho-CoA synthase activity"/>
    <property type="evidence" value="ECO:0007669"/>
    <property type="project" value="UniProtKB-UniRule"/>
</dbReference>
<dbReference type="GO" id="GO:0051191">
    <property type="term" value="P:prosthetic group biosynthetic process"/>
    <property type="evidence" value="ECO:0007669"/>
    <property type="project" value="TreeGrafter"/>
</dbReference>
<dbReference type="Gene3D" id="1.10.4200.10">
    <property type="entry name" value="Triphosphoribosyl-dephospho-CoA protein"/>
    <property type="match status" value="1"/>
</dbReference>
<dbReference type="HAMAP" id="MF_00397">
    <property type="entry name" value="CitG"/>
    <property type="match status" value="1"/>
</dbReference>
<dbReference type="InterPro" id="IPR002736">
    <property type="entry name" value="CitG"/>
</dbReference>
<dbReference type="InterPro" id="IPR017551">
    <property type="entry name" value="TriPribosyl-deP-CoA_syn_CitG"/>
</dbReference>
<dbReference type="NCBIfam" id="TIGR03125">
    <property type="entry name" value="citrate_citG"/>
    <property type="match status" value="1"/>
</dbReference>
<dbReference type="PANTHER" id="PTHR30201:SF2">
    <property type="entry name" value="2-(5''-TRIPHOSPHORIBOSYL)-3'-DEPHOSPHOCOENZYME-A SYNTHASE"/>
    <property type="match status" value="1"/>
</dbReference>
<dbReference type="PANTHER" id="PTHR30201">
    <property type="entry name" value="TRIPHOSPHORIBOSYL-DEPHOSPHO-COA SYNTHASE"/>
    <property type="match status" value="1"/>
</dbReference>
<dbReference type="Pfam" id="PF01874">
    <property type="entry name" value="CitG"/>
    <property type="match status" value="1"/>
</dbReference>